<name>CVC1_PSHV1</name>
<protein>
    <recommendedName>
        <fullName evidence="1">Capsid vertex component 1</fullName>
    </recommendedName>
</protein>
<feature type="chain" id="PRO_0000406846" description="Capsid vertex component 1">
    <location>
        <begin position="1"/>
        <end position="815"/>
    </location>
</feature>
<feature type="region of interest" description="Disordered" evidence="2">
    <location>
        <begin position="227"/>
        <end position="280"/>
    </location>
</feature>
<feature type="region of interest" description="Disordered" evidence="2">
    <location>
        <begin position="795"/>
        <end position="815"/>
    </location>
</feature>
<feature type="compositionally biased region" description="Basic and acidic residues" evidence="2">
    <location>
        <begin position="236"/>
        <end position="262"/>
    </location>
</feature>
<feature type="compositionally biased region" description="Basic and acidic residues" evidence="2">
    <location>
        <begin position="271"/>
        <end position="280"/>
    </location>
</feature>
<feature type="compositionally biased region" description="Polar residues" evidence="2">
    <location>
        <begin position="799"/>
        <end position="809"/>
    </location>
</feature>
<keyword id="KW-0167">Capsid protein</keyword>
<keyword id="KW-1048">Host nucleus</keyword>
<keyword id="KW-0426">Late protein</keyword>
<keyword id="KW-1185">Reference proteome</keyword>
<keyword id="KW-0231">Viral genome packaging</keyword>
<keyword id="KW-1188">Viral release from host cell</keyword>
<keyword id="KW-0946">Virion</keyword>
<dbReference type="EMBL" id="AY372243">
    <property type="protein sequence ID" value="AAQ73729.1"/>
    <property type="molecule type" value="Genomic_DNA"/>
</dbReference>
<dbReference type="RefSeq" id="NP_944423.1">
    <property type="nucleotide sequence ID" value="NC_005264.1"/>
</dbReference>
<dbReference type="SMR" id="Q6UDI1"/>
<dbReference type="GeneID" id="2656959"/>
<dbReference type="KEGG" id="vg:2656959"/>
<dbReference type="Proteomes" id="UP000006840">
    <property type="component" value="Segment"/>
</dbReference>
<dbReference type="GO" id="GO:0042025">
    <property type="term" value="C:host cell nucleus"/>
    <property type="evidence" value="ECO:0007669"/>
    <property type="project" value="UniProtKB-SubCell"/>
</dbReference>
<dbReference type="GO" id="GO:0019028">
    <property type="term" value="C:viral capsid"/>
    <property type="evidence" value="ECO:0007669"/>
    <property type="project" value="UniProtKB-KW"/>
</dbReference>
<dbReference type="GO" id="GO:0051276">
    <property type="term" value="P:chromosome organization"/>
    <property type="evidence" value="ECO:0007669"/>
    <property type="project" value="InterPro"/>
</dbReference>
<dbReference type="HAMAP" id="MF_04017">
    <property type="entry name" value="HSV_CVC1"/>
    <property type="match status" value="1"/>
</dbReference>
<dbReference type="InterPro" id="IPR007640">
    <property type="entry name" value="UL17-like"/>
</dbReference>
<dbReference type="Pfam" id="PF04559">
    <property type="entry name" value="Herpes_UL17"/>
    <property type="match status" value="1"/>
</dbReference>
<proteinExistence type="inferred from homology"/>
<accession>Q6UDI1</accession>
<organismHost>
    <name type="scientific">Amazona oratrix</name>
    <name type="common">yellow-headed parrot</name>
    <dbReference type="NCBI Taxonomy" id="152276"/>
</organismHost>
<comment type="function">
    <text evidence="1">Capsid vertex-specific component that plays a role during viral DNA encapsidation, assuring correct genome cleavage and presumably stabilizing capsids that contain full-length viral genomes.</text>
</comment>
<comment type="subunit">
    <text evidence="1">Interacts (via C-terminus) with capsid vertex component 2/CVC2.</text>
</comment>
<comment type="subcellular location">
    <subcellularLocation>
        <location evidence="1">Virion</location>
    </subcellularLocation>
    <subcellularLocation>
        <location evidence="1">Host nucleus</location>
    </subcellularLocation>
</comment>
<comment type="similarity">
    <text evidence="1">Belongs to the herpesviridae CVC1 protein family.</text>
</comment>
<sequence length="815" mass="87931">MEAHFVAAAAHSAAFGDRVGGESPYLSHIVLSERCMVNFGVPTFLLASGNNFYAEVQIRFHGCLQCTQWRRVFSVYAPSSAIDRILLPDVSSGNCGRSAPFRIMYDSGNSWGGLFISVPVFCDPEKLTFDGYTAVAVRLAICGSADEFYEMLFTYDELAQPQTRFYADAGRFDALALQICEYHIPAAWPSRRKEEFLNLRGRLLELIAARGSTRQLDKVLRADSYITHEQPLVPDPPKEDEAASEAKKKEADDAMKKLKDAAAKVASSDANRQREPGDREQGVSAALLSTCSGMPGDHHAPQHAAVAGAVKAVASGLNSIVRGLSAAGGAAATSASQLADIRYTDALLAGLEPPGRNRGEPRPQRRVPDLESVVMDDGQSRHDRVIPASGLGGARAPASVEECLKALCAIISDPGTPPQSAWTFGPISIVTHSCYNSGSPILIVTYSDGGRRAYPPIVSGITALSEALLAAGASFPSDLNEDEKAELLRKAPCFARPMAADEAREYQKLFSVDSEQVFLFGLQARVTTAMITALTVAVARATDQAADNLLLNQIVSYDLAVRDDDDLPGGRGQRDRLAVAQYDGDRAAGHWPAKLASQAADLIAWFCVNLQTESFATFARSGVWKAILTSLVAEDTLHRLPFLAPFHSDPAIYMFDYFRFGAGNMSRVTGDPNVIRFKPALRTGLMDCEFISGAASPAHPWAVHKFLPGQFHSYLCVGLNSELEGLLIFPGGFGLRFDLGETLDEVWDKNLDRAVLDRYSRLANISGGPPRADRGADCAIADVGCAYPYLKSAPRAPSDFSTTSTSGHESVTILY</sequence>
<organism>
    <name type="scientific">Psittacid herpesvirus 1 (isolate Amazon parrot/-/97-0001/1997)</name>
    <name type="common">PsHV-1</name>
    <name type="synonym">Pacheco's disease virus</name>
    <dbReference type="NCBI Taxonomy" id="670426"/>
    <lineage>
        <taxon>Viruses</taxon>
        <taxon>Duplodnaviria</taxon>
        <taxon>Heunggongvirae</taxon>
        <taxon>Peploviricota</taxon>
        <taxon>Herviviricetes</taxon>
        <taxon>Herpesvirales</taxon>
        <taxon>Orthoherpesviridae</taxon>
        <taxon>Alphaherpesvirinae</taxon>
        <taxon>Iltovirus</taxon>
        <taxon>Iltovirus psittacidalpha1</taxon>
        <taxon>Psittacid alphaherpesvirus 1</taxon>
    </lineage>
</organism>
<reference key="1">
    <citation type="journal article" date="2006" name="J. Virol.">
        <title>Psittacid herpesvirus 1 and infectious laryngotracheitis virus: Comparative genome sequence analysis of two avian alphaherpesviruses.</title>
        <authorList>
            <person name="Thureen D.R."/>
            <person name="Keeler C.L. Jr."/>
        </authorList>
    </citation>
    <scope>NUCLEOTIDE SEQUENCE [LARGE SCALE GENOMIC DNA]</scope>
</reference>
<evidence type="ECO:0000255" key="1">
    <source>
        <dbReference type="HAMAP-Rule" id="MF_04017"/>
    </source>
</evidence>
<evidence type="ECO:0000256" key="2">
    <source>
        <dbReference type="SAM" id="MobiDB-lite"/>
    </source>
</evidence>
<gene>
    <name evidence="1" type="primary">CVC1</name>
    <name type="ordered locus">UL17</name>
</gene>